<gene>
    <name type="primary">serC</name>
    <name type="ordered locus">NT01EI_2459</name>
</gene>
<accession>Q9X4H1</accession>
<accession>C5BBS4</accession>
<feature type="chain" id="PRO_0000150170" description="Phosphoserine aminotransferase">
    <location>
        <begin position="1"/>
        <end position="363"/>
    </location>
</feature>
<feature type="binding site" evidence="1">
    <location>
        <position position="42"/>
    </location>
    <ligand>
        <name>L-glutamate</name>
        <dbReference type="ChEBI" id="CHEBI:29985"/>
    </ligand>
</feature>
<feature type="binding site" evidence="1">
    <location>
        <begin position="76"/>
        <end position="77"/>
    </location>
    <ligand>
        <name>pyridoxal 5'-phosphate</name>
        <dbReference type="ChEBI" id="CHEBI:597326"/>
    </ligand>
</feature>
<feature type="binding site" evidence="1">
    <location>
        <position position="104"/>
    </location>
    <ligand>
        <name>pyridoxal 5'-phosphate</name>
        <dbReference type="ChEBI" id="CHEBI:597326"/>
    </ligand>
</feature>
<feature type="binding site" evidence="1">
    <location>
        <position position="155"/>
    </location>
    <ligand>
        <name>pyridoxal 5'-phosphate</name>
        <dbReference type="ChEBI" id="CHEBI:597326"/>
    </ligand>
</feature>
<feature type="binding site" evidence="1">
    <location>
        <position position="175"/>
    </location>
    <ligand>
        <name>pyridoxal 5'-phosphate</name>
        <dbReference type="ChEBI" id="CHEBI:597326"/>
    </ligand>
</feature>
<feature type="binding site" evidence="1">
    <location>
        <position position="198"/>
    </location>
    <ligand>
        <name>pyridoxal 5'-phosphate</name>
        <dbReference type="ChEBI" id="CHEBI:597326"/>
    </ligand>
</feature>
<feature type="binding site" evidence="1">
    <location>
        <begin position="240"/>
        <end position="241"/>
    </location>
    <ligand>
        <name>pyridoxal 5'-phosphate</name>
        <dbReference type="ChEBI" id="CHEBI:597326"/>
    </ligand>
</feature>
<feature type="modified residue" description="N6-(pyridoxal phosphate)lysine" evidence="1">
    <location>
        <position position="199"/>
    </location>
</feature>
<sequence>MTQVYNFCAGPAMLPVEVLRRAEQELCNWHGLGTSVMEISHRGEAFMQVAAEAEQDLRDLLKVPADYRILFCHGGARGQFAAVPLNLLGSERTARADYAVGGYWAQSAAKEAQRYCNPHAIDIAQRVDGKLSMKPMAQWDLLEESAYLHYCPNETIDGVTIDEEPDFGDRVVVADMSSTILSRPIDVSRYGLIYAGAQKNVGPAGITLVIVREDLLGRARREIPSILDYQVLVESDSMFNTPPTFAWYLSGMVFKWLKEQGGVSEMARRNQAKADLLYQAIDGGEFYRNDVAPANRSRMNVPFQMVDSALDPLFWDEARKAGLHALKGHKVAGGMRASIYNAMPLAGVQALVAFMADFARRHG</sequence>
<evidence type="ECO:0000250" key="1"/>
<evidence type="ECO:0000305" key="2"/>
<name>SERC_EDWI9</name>
<reference key="1">
    <citation type="submission" date="2009-03" db="EMBL/GenBank/DDBJ databases">
        <title>Complete genome sequence of Edwardsiella ictaluri 93-146.</title>
        <authorList>
            <person name="Williams M.L."/>
            <person name="Gillaspy A.F."/>
            <person name="Dyer D.W."/>
            <person name="Thune R.L."/>
            <person name="Waldbieser G.C."/>
            <person name="Schuster S.C."/>
            <person name="Gipson J."/>
            <person name="Zaitshik J."/>
            <person name="Landry C."/>
            <person name="Lawrence M.L."/>
        </authorList>
    </citation>
    <scope>NUCLEOTIDE SEQUENCE [LARGE SCALE GENOMIC DNA]</scope>
    <source>
        <strain>93-146</strain>
    </source>
</reference>
<reference key="2">
    <citation type="submission" date="1998-11" db="EMBL/GenBank/DDBJ databases">
        <title>An aroA mutant of Edwardsiella ictaluri is safe and efficacious as a live, attenuated vaccine.</title>
        <authorList>
            <person name="Thune R.L."/>
            <person name="Fernandez D.H."/>
            <person name="Battista J.R."/>
        </authorList>
    </citation>
    <scope>NUCLEOTIDE SEQUENCE [GENOMIC DNA] OF 313-363</scope>
</reference>
<proteinExistence type="inferred from homology"/>
<comment type="function">
    <text evidence="1">Catalyzes the reversible conversion of 3-phosphohydroxypyruvate to phosphoserine and of 3-hydroxy-2-oxo-4-phosphonooxybutanoate to phosphohydroxythreonine.</text>
</comment>
<comment type="catalytic activity">
    <reaction>
        <text>O-phospho-L-serine + 2-oxoglutarate = 3-phosphooxypyruvate + L-glutamate</text>
        <dbReference type="Rhea" id="RHEA:14329"/>
        <dbReference type="ChEBI" id="CHEBI:16810"/>
        <dbReference type="ChEBI" id="CHEBI:18110"/>
        <dbReference type="ChEBI" id="CHEBI:29985"/>
        <dbReference type="ChEBI" id="CHEBI:57524"/>
        <dbReference type="EC" id="2.6.1.52"/>
    </reaction>
</comment>
<comment type="catalytic activity">
    <reaction>
        <text>4-(phosphooxy)-L-threonine + 2-oxoglutarate = (R)-3-hydroxy-2-oxo-4-phosphooxybutanoate + L-glutamate</text>
        <dbReference type="Rhea" id="RHEA:16573"/>
        <dbReference type="ChEBI" id="CHEBI:16810"/>
        <dbReference type="ChEBI" id="CHEBI:29985"/>
        <dbReference type="ChEBI" id="CHEBI:58452"/>
        <dbReference type="ChEBI" id="CHEBI:58538"/>
        <dbReference type="EC" id="2.6.1.52"/>
    </reaction>
</comment>
<comment type="cofactor">
    <cofactor evidence="1">
        <name>pyridoxal 5'-phosphate</name>
        <dbReference type="ChEBI" id="CHEBI:597326"/>
    </cofactor>
    <text evidence="1">Binds 1 pyridoxal phosphate per subunit.</text>
</comment>
<comment type="pathway">
    <text>Amino-acid biosynthesis; L-serine biosynthesis; L-serine from 3-phospho-D-glycerate: step 2/3.</text>
</comment>
<comment type="pathway">
    <text>Cofactor biosynthesis; pyridoxine 5'-phosphate biosynthesis; pyridoxine 5'-phosphate from D-erythrose 4-phosphate: step 3/5.</text>
</comment>
<comment type="subunit">
    <text evidence="1">Homodimer.</text>
</comment>
<comment type="subcellular location">
    <subcellularLocation>
        <location evidence="1">Cytoplasm</location>
    </subcellularLocation>
</comment>
<comment type="similarity">
    <text evidence="2">Belongs to the class-V pyridoxal-phosphate-dependent aminotransferase family. SerC subfamily.</text>
</comment>
<keyword id="KW-0028">Amino-acid biosynthesis</keyword>
<keyword id="KW-0032">Aminotransferase</keyword>
<keyword id="KW-0963">Cytoplasm</keyword>
<keyword id="KW-0663">Pyridoxal phosphate</keyword>
<keyword id="KW-0664">Pyridoxine biosynthesis</keyword>
<keyword id="KW-0718">Serine biosynthesis</keyword>
<keyword id="KW-0808">Transferase</keyword>
<organism>
    <name type="scientific">Edwardsiella ictaluri (strain 93-146)</name>
    <dbReference type="NCBI Taxonomy" id="634503"/>
    <lineage>
        <taxon>Bacteria</taxon>
        <taxon>Pseudomonadati</taxon>
        <taxon>Pseudomonadota</taxon>
        <taxon>Gammaproteobacteria</taxon>
        <taxon>Enterobacterales</taxon>
        <taxon>Hafniaceae</taxon>
        <taxon>Edwardsiella</taxon>
    </lineage>
</organism>
<dbReference type="EC" id="2.6.1.52"/>
<dbReference type="EMBL" id="CP001600">
    <property type="protein sequence ID" value="ACR69629.1"/>
    <property type="molecule type" value="Genomic_DNA"/>
</dbReference>
<dbReference type="EMBL" id="AF110153">
    <property type="protein sequence ID" value="AAD28374.1"/>
    <property type="molecule type" value="Genomic_DNA"/>
</dbReference>
<dbReference type="RefSeq" id="WP_015871743.1">
    <property type="nucleotide sequence ID" value="NZ_CP169062.1"/>
</dbReference>
<dbReference type="SMR" id="Q9X4H1"/>
<dbReference type="STRING" id="67780.B6E78_04435"/>
<dbReference type="GeneID" id="69539377"/>
<dbReference type="KEGG" id="eic:NT01EI_2459"/>
<dbReference type="PATRIC" id="fig|634503.3.peg.2184"/>
<dbReference type="HOGENOM" id="CLU_034866_0_2_6"/>
<dbReference type="OrthoDB" id="9809412at2"/>
<dbReference type="UniPathway" id="UPA00135">
    <property type="reaction ID" value="UER00197"/>
</dbReference>
<dbReference type="UniPathway" id="UPA00244">
    <property type="reaction ID" value="UER00311"/>
</dbReference>
<dbReference type="Proteomes" id="UP000001485">
    <property type="component" value="Chromosome"/>
</dbReference>
<dbReference type="GO" id="GO:0005737">
    <property type="term" value="C:cytoplasm"/>
    <property type="evidence" value="ECO:0007669"/>
    <property type="project" value="UniProtKB-SubCell"/>
</dbReference>
<dbReference type="GO" id="GO:0004648">
    <property type="term" value="F:O-phospho-L-serine:2-oxoglutarate aminotransferase activity"/>
    <property type="evidence" value="ECO:0007669"/>
    <property type="project" value="UniProtKB-UniRule"/>
</dbReference>
<dbReference type="GO" id="GO:0030170">
    <property type="term" value="F:pyridoxal phosphate binding"/>
    <property type="evidence" value="ECO:0007669"/>
    <property type="project" value="UniProtKB-UniRule"/>
</dbReference>
<dbReference type="GO" id="GO:0006564">
    <property type="term" value="P:L-serine biosynthetic process"/>
    <property type="evidence" value="ECO:0007669"/>
    <property type="project" value="UniProtKB-UniRule"/>
</dbReference>
<dbReference type="GO" id="GO:0008615">
    <property type="term" value="P:pyridoxine biosynthetic process"/>
    <property type="evidence" value="ECO:0007669"/>
    <property type="project" value="UniProtKB-UniRule"/>
</dbReference>
<dbReference type="CDD" id="cd00611">
    <property type="entry name" value="PSAT_like"/>
    <property type="match status" value="1"/>
</dbReference>
<dbReference type="FunFam" id="3.40.640.10:FF:000010">
    <property type="entry name" value="Phosphoserine aminotransferase"/>
    <property type="match status" value="1"/>
</dbReference>
<dbReference type="FunFam" id="3.90.1150.10:FF:000006">
    <property type="entry name" value="Phosphoserine aminotransferase"/>
    <property type="match status" value="1"/>
</dbReference>
<dbReference type="Gene3D" id="3.90.1150.10">
    <property type="entry name" value="Aspartate Aminotransferase, domain 1"/>
    <property type="match status" value="1"/>
</dbReference>
<dbReference type="Gene3D" id="3.40.640.10">
    <property type="entry name" value="Type I PLP-dependent aspartate aminotransferase-like (Major domain)"/>
    <property type="match status" value="1"/>
</dbReference>
<dbReference type="HAMAP" id="MF_00160">
    <property type="entry name" value="SerC_aminotrans_5"/>
    <property type="match status" value="1"/>
</dbReference>
<dbReference type="InterPro" id="IPR000192">
    <property type="entry name" value="Aminotrans_V_dom"/>
</dbReference>
<dbReference type="InterPro" id="IPR020578">
    <property type="entry name" value="Aminotrans_V_PyrdxlP_BS"/>
</dbReference>
<dbReference type="InterPro" id="IPR022278">
    <property type="entry name" value="Pser_aminoTfrase"/>
</dbReference>
<dbReference type="InterPro" id="IPR015424">
    <property type="entry name" value="PyrdxlP-dep_Trfase"/>
</dbReference>
<dbReference type="InterPro" id="IPR015421">
    <property type="entry name" value="PyrdxlP-dep_Trfase_major"/>
</dbReference>
<dbReference type="InterPro" id="IPR015422">
    <property type="entry name" value="PyrdxlP-dep_Trfase_small"/>
</dbReference>
<dbReference type="NCBIfam" id="NF003764">
    <property type="entry name" value="PRK05355.1"/>
    <property type="match status" value="1"/>
</dbReference>
<dbReference type="NCBIfam" id="TIGR01364">
    <property type="entry name" value="serC_1"/>
    <property type="match status" value="1"/>
</dbReference>
<dbReference type="PANTHER" id="PTHR43247">
    <property type="entry name" value="PHOSPHOSERINE AMINOTRANSFERASE"/>
    <property type="match status" value="1"/>
</dbReference>
<dbReference type="PANTHER" id="PTHR43247:SF1">
    <property type="entry name" value="PHOSPHOSERINE AMINOTRANSFERASE"/>
    <property type="match status" value="1"/>
</dbReference>
<dbReference type="Pfam" id="PF00266">
    <property type="entry name" value="Aminotran_5"/>
    <property type="match status" value="1"/>
</dbReference>
<dbReference type="PIRSF" id="PIRSF000525">
    <property type="entry name" value="SerC"/>
    <property type="match status" value="1"/>
</dbReference>
<dbReference type="SUPFAM" id="SSF53383">
    <property type="entry name" value="PLP-dependent transferases"/>
    <property type="match status" value="1"/>
</dbReference>
<dbReference type="PROSITE" id="PS00595">
    <property type="entry name" value="AA_TRANSFER_CLASS_5"/>
    <property type="match status" value="1"/>
</dbReference>
<protein>
    <recommendedName>
        <fullName>Phosphoserine aminotransferase</fullName>
        <ecNumber>2.6.1.52</ecNumber>
    </recommendedName>
    <alternativeName>
        <fullName>Phosphohydroxythreonine aminotransferase</fullName>
        <shortName>PSAT</shortName>
    </alternativeName>
</protein>